<keyword id="KW-0238">DNA-binding</keyword>
<keyword id="KW-1185">Reference proteome</keyword>
<keyword id="KW-0678">Repressor</keyword>
<keyword id="KW-0804">Transcription</keyword>
<keyword id="KW-0805">Transcription regulation</keyword>
<sequence>MSNTDASGEKRVTGTSERREQIIQRLRQQGSVQVNDLSALYGVSTVTIRNDLAFLEKQGIAVRAYGGALICDSTTPSVEPSVEDKSALNTAMKRSVAKAAVELIQPGHRVILDSGTTTFEIARLMRKHTDVIAMTNGMNVANALLEAEGVELLMTGGHLRRQSQSFYGDQAEQSLQNYHFDMLFLGVDAIDLERGVSTHNEDEARLNRRMCEVAERIIVVTDSSKFNRSSLHKIIDTQRIDMIIVDEGIPADSLEGLRKAGVEVILVGE</sequence>
<evidence type="ECO:0000250" key="1"/>
<evidence type="ECO:0000255" key="2">
    <source>
        <dbReference type="PROSITE-ProRule" id="PRU00349"/>
    </source>
</evidence>
<feature type="chain" id="PRO_0000050242" description="Putative aga operon transcriptional repressor">
    <location>
        <begin position="1"/>
        <end position="269"/>
    </location>
</feature>
<feature type="domain" description="HTH deoR-type" evidence="2">
    <location>
        <begin position="15"/>
        <end position="70"/>
    </location>
</feature>
<feature type="DNA-binding region" description="H-T-H motif" evidence="2">
    <location>
        <begin position="32"/>
        <end position="51"/>
    </location>
</feature>
<name>AGAR_ECO57</name>
<dbReference type="EMBL" id="AE005174">
    <property type="protein sequence ID" value="AAG58261.1"/>
    <property type="molecule type" value="Genomic_DNA"/>
</dbReference>
<dbReference type="EMBL" id="BA000007">
    <property type="protein sequence ID" value="BAB37432.1"/>
    <property type="molecule type" value="Genomic_DNA"/>
</dbReference>
<dbReference type="PIR" id="A85975">
    <property type="entry name" value="A85975"/>
</dbReference>
<dbReference type="PIR" id="A91130">
    <property type="entry name" value="A91130"/>
</dbReference>
<dbReference type="RefSeq" id="NP_312036.1">
    <property type="nucleotide sequence ID" value="NC_002695.1"/>
</dbReference>
<dbReference type="RefSeq" id="WP_000072187.1">
    <property type="nucleotide sequence ID" value="NZ_VOAI01000009.1"/>
</dbReference>
<dbReference type="SMR" id="P0ACK4"/>
<dbReference type="STRING" id="155864.Z4483"/>
<dbReference type="GeneID" id="916155"/>
<dbReference type="GeneID" id="93778853"/>
<dbReference type="KEGG" id="ece:Z4483"/>
<dbReference type="KEGG" id="ecs:ECs_4009"/>
<dbReference type="PATRIC" id="fig|386585.9.peg.4184"/>
<dbReference type="eggNOG" id="COG1349">
    <property type="taxonomic scope" value="Bacteria"/>
</dbReference>
<dbReference type="HOGENOM" id="CLU_060699_3_1_6"/>
<dbReference type="OMA" id="KMCEVAE"/>
<dbReference type="Proteomes" id="UP000000558">
    <property type="component" value="Chromosome"/>
</dbReference>
<dbReference type="Proteomes" id="UP000002519">
    <property type="component" value="Chromosome"/>
</dbReference>
<dbReference type="GO" id="GO:0003677">
    <property type="term" value="F:DNA binding"/>
    <property type="evidence" value="ECO:0007669"/>
    <property type="project" value="UniProtKB-KW"/>
</dbReference>
<dbReference type="GO" id="GO:0003700">
    <property type="term" value="F:DNA-binding transcription factor activity"/>
    <property type="evidence" value="ECO:0007669"/>
    <property type="project" value="InterPro"/>
</dbReference>
<dbReference type="FunFam" id="1.10.10.10:FF:000258">
    <property type="entry name" value="DeoR family transcriptional regulator"/>
    <property type="match status" value="1"/>
</dbReference>
<dbReference type="FunFam" id="3.40.50.1360:FF:000008">
    <property type="entry name" value="Transcriptional regulator, DeoR family"/>
    <property type="match status" value="1"/>
</dbReference>
<dbReference type="Gene3D" id="3.40.50.1360">
    <property type="match status" value="1"/>
</dbReference>
<dbReference type="Gene3D" id="1.10.10.10">
    <property type="entry name" value="Winged helix-like DNA-binding domain superfamily/Winged helix DNA-binding domain"/>
    <property type="match status" value="1"/>
</dbReference>
<dbReference type="InterPro" id="IPR047779">
    <property type="entry name" value="AgaR-like"/>
</dbReference>
<dbReference type="InterPro" id="IPR050313">
    <property type="entry name" value="Carb_Metab_HTH_regulators"/>
</dbReference>
<dbReference type="InterPro" id="IPR014036">
    <property type="entry name" value="DeoR-like_C"/>
</dbReference>
<dbReference type="InterPro" id="IPR001034">
    <property type="entry name" value="DeoR_HTH"/>
</dbReference>
<dbReference type="InterPro" id="IPR037171">
    <property type="entry name" value="NagB/RpiA_transferase-like"/>
</dbReference>
<dbReference type="InterPro" id="IPR018356">
    <property type="entry name" value="Tscrpt_reg_HTH_DeoR_CS"/>
</dbReference>
<dbReference type="InterPro" id="IPR036388">
    <property type="entry name" value="WH-like_DNA-bd_sf"/>
</dbReference>
<dbReference type="InterPro" id="IPR036390">
    <property type="entry name" value="WH_DNA-bd_sf"/>
</dbReference>
<dbReference type="NCBIfam" id="NF040755">
    <property type="entry name" value="AgaR"/>
    <property type="match status" value="1"/>
</dbReference>
<dbReference type="NCBIfam" id="NF007316">
    <property type="entry name" value="PRK09802.1"/>
    <property type="match status" value="1"/>
</dbReference>
<dbReference type="PANTHER" id="PTHR30363:SF44">
    <property type="entry name" value="AGA OPERON TRANSCRIPTIONAL REPRESSOR-RELATED"/>
    <property type="match status" value="1"/>
</dbReference>
<dbReference type="PANTHER" id="PTHR30363">
    <property type="entry name" value="HTH-TYPE TRANSCRIPTIONAL REGULATOR SRLR-RELATED"/>
    <property type="match status" value="1"/>
</dbReference>
<dbReference type="Pfam" id="PF00455">
    <property type="entry name" value="DeoRC"/>
    <property type="match status" value="1"/>
</dbReference>
<dbReference type="Pfam" id="PF08220">
    <property type="entry name" value="HTH_DeoR"/>
    <property type="match status" value="1"/>
</dbReference>
<dbReference type="SMART" id="SM01134">
    <property type="entry name" value="DeoRC"/>
    <property type="match status" value="1"/>
</dbReference>
<dbReference type="SMART" id="SM00420">
    <property type="entry name" value="HTH_DEOR"/>
    <property type="match status" value="1"/>
</dbReference>
<dbReference type="SUPFAM" id="SSF100950">
    <property type="entry name" value="NagB/RpiA/CoA transferase-like"/>
    <property type="match status" value="1"/>
</dbReference>
<dbReference type="SUPFAM" id="SSF46785">
    <property type="entry name" value="Winged helix' DNA-binding domain"/>
    <property type="match status" value="1"/>
</dbReference>
<dbReference type="PROSITE" id="PS00894">
    <property type="entry name" value="HTH_DEOR_1"/>
    <property type="match status" value="1"/>
</dbReference>
<dbReference type="PROSITE" id="PS51000">
    <property type="entry name" value="HTH_DEOR_2"/>
    <property type="match status" value="1"/>
</dbReference>
<gene>
    <name type="primary">agaR</name>
    <name type="ordered locus">Z4483</name>
    <name type="ordered locus">ECs4009</name>
</gene>
<protein>
    <recommendedName>
        <fullName>Putative aga operon transcriptional repressor</fullName>
    </recommendedName>
</protein>
<organism>
    <name type="scientific">Escherichia coli O157:H7</name>
    <dbReference type="NCBI Taxonomy" id="83334"/>
    <lineage>
        <taxon>Bacteria</taxon>
        <taxon>Pseudomonadati</taxon>
        <taxon>Pseudomonadota</taxon>
        <taxon>Gammaproteobacteria</taxon>
        <taxon>Enterobacterales</taxon>
        <taxon>Enterobacteriaceae</taxon>
        <taxon>Escherichia</taxon>
    </lineage>
</organism>
<reference key="1">
    <citation type="journal article" date="2001" name="Nature">
        <title>Genome sequence of enterohaemorrhagic Escherichia coli O157:H7.</title>
        <authorList>
            <person name="Perna N.T."/>
            <person name="Plunkett G. III"/>
            <person name="Burland V."/>
            <person name="Mau B."/>
            <person name="Glasner J.D."/>
            <person name="Rose D.J."/>
            <person name="Mayhew G.F."/>
            <person name="Evans P.S."/>
            <person name="Gregor J."/>
            <person name="Kirkpatrick H.A."/>
            <person name="Posfai G."/>
            <person name="Hackett J."/>
            <person name="Klink S."/>
            <person name="Boutin A."/>
            <person name="Shao Y."/>
            <person name="Miller L."/>
            <person name="Grotbeck E.J."/>
            <person name="Davis N.W."/>
            <person name="Lim A."/>
            <person name="Dimalanta E.T."/>
            <person name="Potamousis K."/>
            <person name="Apodaca J."/>
            <person name="Anantharaman T.S."/>
            <person name="Lin J."/>
            <person name="Yen G."/>
            <person name="Schwartz D.C."/>
            <person name="Welch R.A."/>
            <person name="Blattner F.R."/>
        </authorList>
    </citation>
    <scope>NUCLEOTIDE SEQUENCE [LARGE SCALE GENOMIC DNA]</scope>
    <source>
        <strain>O157:H7 / EDL933 / ATCC 700927 / EHEC</strain>
    </source>
</reference>
<reference key="2">
    <citation type="journal article" date="2001" name="DNA Res.">
        <title>Complete genome sequence of enterohemorrhagic Escherichia coli O157:H7 and genomic comparison with a laboratory strain K-12.</title>
        <authorList>
            <person name="Hayashi T."/>
            <person name="Makino K."/>
            <person name="Ohnishi M."/>
            <person name="Kurokawa K."/>
            <person name="Ishii K."/>
            <person name="Yokoyama K."/>
            <person name="Han C.-G."/>
            <person name="Ohtsubo E."/>
            <person name="Nakayama K."/>
            <person name="Murata T."/>
            <person name="Tanaka M."/>
            <person name="Tobe T."/>
            <person name="Iida T."/>
            <person name="Takami H."/>
            <person name="Honda T."/>
            <person name="Sasakawa C."/>
            <person name="Ogasawara N."/>
            <person name="Yasunaga T."/>
            <person name="Kuhara S."/>
            <person name="Shiba T."/>
            <person name="Hattori M."/>
            <person name="Shinagawa H."/>
        </authorList>
    </citation>
    <scope>NUCLEOTIDE SEQUENCE [LARGE SCALE GENOMIC DNA]</scope>
    <source>
        <strain>O157:H7 / Sakai / RIMD 0509952 / EHEC</strain>
    </source>
</reference>
<proteinExistence type="inferred from homology"/>
<comment type="function">
    <text evidence="1">Probable repressor for the aga operon for N-acetyl galactosamine transport and metabolism.</text>
</comment>
<accession>P0ACK4</accession>
<accession>P42902</accession>